<proteinExistence type="inferred from homology"/>
<reference key="1">
    <citation type="journal article" date="2004" name="Science">
        <title>A predator unmasked: life cycle of Bdellovibrio bacteriovorus from a genomic perspective.</title>
        <authorList>
            <person name="Rendulic S."/>
            <person name="Jagtap P."/>
            <person name="Rosinus A."/>
            <person name="Eppinger M."/>
            <person name="Baar C."/>
            <person name="Lanz C."/>
            <person name="Keller H."/>
            <person name="Lambert C."/>
            <person name="Evans K.J."/>
            <person name="Goesmann A."/>
            <person name="Meyer F."/>
            <person name="Sockett R.E."/>
            <person name="Schuster S.C."/>
        </authorList>
    </citation>
    <scope>NUCLEOTIDE SEQUENCE [LARGE SCALE GENOMIC DNA]</scope>
    <source>
        <strain>ATCC 15356 / DSM 50701 / NCIMB 9529 / HD100</strain>
    </source>
</reference>
<accession>Q6MMK2</accession>
<protein>
    <recommendedName>
        <fullName evidence="1">Isopentenyl-diphosphate delta-isomerase</fullName>
        <shortName evidence="1">IPP isomerase</shortName>
        <ecNumber evidence="1">5.3.3.2</ecNumber>
    </recommendedName>
    <alternativeName>
        <fullName evidence="1">Isopentenyl diphosphate:dimethylallyl diphosphate isomerase</fullName>
    </alternativeName>
    <alternativeName>
        <fullName evidence="1">Isopentenyl pyrophosphate isomerase</fullName>
    </alternativeName>
    <alternativeName>
        <fullName evidence="1">Type 2 isopentenyl diphosphate isomerase</fullName>
        <shortName evidence="1">IDI-2</shortName>
    </alternativeName>
</protein>
<sequence>MDESNSQFEKRKRDHIRIALDPRSQTDGQNGLDSITLIHEALPDLNFKEVDISTSFFFSGESIPLSSPIFISSMTAGHEKGREINEALARLSDRRQILMGVGSQRRELEDSNAAEEWARVRKQAPKARLLGNIGIAQLIKSPIDKIRRLIDSTEAVALFVHLNPLQEALQPEGTTDFKNGLAAIENLVKLAGVPVIVKETGCGFSVDTLKRLSSTGIYGVDVSGKGGTHWGRVEGYRSEESDMLYHVAQTFANWGISTKQSMLNAIDARVEYQLWASGGVRNGLEIGKLMALGASKVGVAKPFLEAALQGDEALEKLLTQLETELKVTMFCTGSRNLKDLQSKKVIQ</sequence>
<name>IDI2_BDEBA</name>
<gene>
    <name evidence="1" type="primary">fni</name>
    <name type="ordered locus">Bd1626</name>
</gene>
<feature type="chain" id="PRO_0000229500" description="Isopentenyl-diphosphate delta-isomerase">
    <location>
        <begin position="1"/>
        <end position="347"/>
    </location>
</feature>
<feature type="region of interest" description="Disordered" evidence="2">
    <location>
        <begin position="1"/>
        <end position="31"/>
    </location>
</feature>
<feature type="compositionally biased region" description="Basic and acidic residues" evidence="2">
    <location>
        <begin position="8"/>
        <end position="20"/>
    </location>
</feature>
<feature type="binding site" evidence="1">
    <location>
        <begin position="11"/>
        <end position="12"/>
    </location>
    <ligand>
        <name>substrate</name>
    </ligand>
</feature>
<feature type="binding site" evidence="1">
    <location>
        <position position="72"/>
    </location>
    <ligand>
        <name>FMN</name>
        <dbReference type="ChEBI" id="CHEBI:58210"/>
    </ligand>
</feature>
<feature type="binding site" evidence="1">
    <location>
        <begin position="73"/>
        <end position="75"/>
    </location>
    <ligand>
        <name>FMN</name>
        <dbReference type="ChEBI" id="CHEBI:58210"/>
    </ligand>
</feature>
<feature type="binding site" evidence="1">
    <location>
        <begin position="103"/>
        <end position="105"/>
    </location>
    <ligand>
        <name>substrate</name>
    </ligand>
</feature>
<feature type="binding site" evidence="1">
    <location>
        <position position="103"/>
    </location>
    <ligand>
        <name>FMN</name>
        <dbReference type="ChEBI" id="CHEBI:58210"/>
    </ligand>
</feature>
<feature type="binding site" evidence="1">
    <location>
        <position position="132"/>
    </location>
    <ligand>
        <name>FMN</name>
        <dbReference type="ChEBI" id="CHEBI:58210"/>
    </ligand>
</feature>
<feature type="binding site" evidence="1">
    <location>
        <position position="166"/>
    </location>
    <ligand>
        <name>substrate</name>
    </ligand>
</feature>
<feature type="binding site" evidence="1">
    <location>
        <position position="167"/>
    </location>
    <ligand>
        <name>Mg(2+)</name>
        <dbReference type="ChEBI" id="CHEBI:18420"/>
    </ligand>
</feature>
<feature type="binding site" evidence="1">
    <location>
        <position position="198"/>
    </location>
    <ligand>
        <name>FMN</name>
        <dbReference type="ChEBI" id="CHEBI:58210"/>
    </ligand>
</feature>
<feature type="binding site" evidence="1">
    <location>
        <position position="223"/>
    </location>
    <ligand>
        <name>FMN</name>
        <dbReference type="ChEBI" id="CHEBI:58210"/>
    </ligand>
</feature>
<feature type="binding site" evidence="1">
    <location>
        <position position="228"/>
    </location>
    <ligand>
        <name>FMN</name>
        <dbReference type="ChEBI" id="CHEBI:58210"/>
    </ligand>
</feature>
<feature type="binding site" evidence="1">
    <location>
        <begin position="279"/>
        <end position="281"/>
    </location>
    <ligand>
        <name>FMN</name>
        <dbReference type="ChEBI" id="CHEBI:58210"/>
    </ligand>
</feature>
<feature type="binding site" evidence="1">
    <location>
        <begin position="300"/>
        <end position="301"/>
    </location>
    <ligand>
        <name>FMN</name>
        <dbReference type="ChEBI" id="CHEBI:58210"/>
    </ligand>
</feature>
<organism>
    <name type="scientific">Bdellovibrio bacteriovorus (strain ATCC 15356 / DSM 50701 / NCIMB 9529 / HD100)</name>
    <dbReference type="NCBI Taxonomy" id="264462"/>
    <lineage>
        <taxon>Bacteria</taxon>
        <taxon>Pseudomonadati</taxon>
        <taxon>Bdellovibrionota</taxon>
        <taxon>Bdellovibrionia</taxon>
        <taxon>Bdellovibrionales</taxon>
        <taxon>Pseudobdellovibrionaceae</taxon>
        <taxon>Bdellovibrio</taxon>
    </lineage>
</organism>
<keyword id="KW-0963">Cytoplasm</keyword>
<keyword id="KW-0285">Flavoprotein</keyword>
<keyword id="KW-0288">FMN</keyword>
<keyword id="KW-0413">Isomerase</keyword>
<keyword id="KW-0414">Isoprene biosynthesis</keyword>
<keyword id="KW-0460">Magnesium</keyword>
<keyword id="KW-0479">Metal-binding</keyword>
<keyword id="KW-0521">NADP</keyword>
<keyword id="KW-1185">Reference proteome</keyword>
<evidence type="ECO:0000255" key="1">
    <source>
        <dbReference type="HAMAP-Rule" id="MF_00354"/>
    </source>
</evidence>
<evidence type="ECO:0000256" key="2">
    <source>
        <dbReference type="SAM" id="MobiDB-lite"/>
    </source>
</evidence>
<dbReference type="EC" id="5.3.3.2" evidence="1"/>
<dbReference type="EMBL" id="BX842650">
    <property type="protein sequence ID" value="CAE79502.1"/>
    <property type="molecule type" value="Genomic_DNA"/>
</dbReference>
<dbReference type="RefSeq" id="WP_011164104.1">
    <property type="nucleotide sequence ID" value="NC_005363.1"/>
</dbReference>
<dbReference type="SMR" id="Q6MMK2"/>
<dbReference type="STRING" id="264462.Bd1626"/>
<dbReference type="GeneID" id="93012616"/>
<dbReference type="KEGG" id="bba:Bd1626"/>
<dbReference type="eggNOG" id="COG1304">
    <property type="taxonomic scope" value="Bacteria"/>
</dbReference>
<dbReference type="HOGENOM" id="CLU_065515_1_0_7"/>
<dbReference type="Proteomes" id="UP000008080">
    <property type="component" value="Chromosome"/>
</dbReference>
<dbReference type="GO" id="GO:0005737">
    <property type="term" value="C:cytoplasm"/>
    <property type="evidence" value="ECO:0007669"/>
    <property type="project" value="UniProtKB-SubCell"/>
</dbReference>
<dbReference type="GO" id="GO:0010181">
    <property type="term" value="F:FMN binding"/>
    <property type="evidence" value="ECO:0007669"/>
    <property type="project" value="UniProtKB-UniRule"/>
</dbReference>
<dbReference type="GO" id="GO:0004452">
    <property type="term" value="F:isopentenyl-diphosphate delta-isomerase activity"/>
    <property type="evidence" value="ECO:0007669"/>
    <property type="project" value="UniProtKB-UniRule"/>
</dbReference>
<dbReference type="GO" id="GO:0000287">
    <property type="term" value="F:magnesium ion binding"/>
    <property type="evidence" value="ECO:0007669"/>
    <property type="project" value="UniProtKB-UniRule"/>
</dbReference>
<dbReference type="GO" id="GO:0070402">
    <property type="term" value="F:NADPH binding"/>
    <property type="evidence" value="ECO:0007669"/>
    <property type="project" value="UniProtKB-UniRule"/>
</dbReference>
<dbReference type="GO" id="GO:0016491">
    <property type="term" value="F:oxidoreductase activity"/>
    <property type="evidence" value="ECO:0007669"/>
    <property type="project" value="InterPro"/>
</dbReference>
<dbReference type="GO" id="GO:0008299">
    <property type="term" value="P:isoprenoid biosynthetic process"/>
    <property type="evidence" value="ECO:0007669"/>
    <property type="project" value="UniProtKB-UniRule"/>
</dbReference>
<dbReference type="CDD" id="cd02811">
    <property type="entry name" value="IDI-2_FMN"/>
    <property type="match status" value="1"/>
</dbReference>
<dbReference type="Gene3D" id="3.20.20.70">
    <property type="entry name" value="Aldolase class I"/>
    <property type="match status" value="1"/>
</dbReference>
<dbReference type="HAMAP" id="MF_00354">
    <property type="entry name" value="Idi_2"/>
    <property type="match status" value="1"/>
</dbReference>
<dbReference type="InterPro" id="IPR013785">
    <property type="entry name" value="Aldolase_TIM"/>
</dbReference>
<dbReference type="InterPro" id="IPR000262">
    <property type="entry name" value="FMN-dep_DH"/>
</dbReference>
<dbReference type="InterPro" id="IPR011179">
    <property type="entry name" value="IPdP_isomerase"/>
</dbReference>
<dbReference type="NCBIfam" id="TIGR02151">
    <property type="entry name" value="IPP_isom_2"/>
    <property type="match status" value="1"/>
</dbReference>
<dbReference type="PANTHER" id="PTHR43665">
    <property type="entry name" value="ISOPENTENYL-DIPHOSPHATE DELTA-ISOMERASE"/>
    <property type="match status" value="1"/>
</dbReference>
<dbReference type="PANTHER" id="PTHR43665:SF1">
    <property type="entry name" value="ISOPENTENYL-DIPHOSPHATE DELTA-ISOMERASE"/>
    <property type="match status" value="1"/>
</dbReference>
<dbReference type="Pfam" id="PF01070">
    <property type="entry name" value="FMN_dh"/>
    <property type="match status" value="1"/>
</dbReference>
<dbReference type="PIRSF" id="PIRSF003314">
    <property type="entry name" value="IPP_isomerase"/>
    <property type="match status" value="1"/>
</dbReference>
<dbReference type="SUPFAM" id="SSF51395">
    <property type="entry name" value="FMN-linked oxidoreductases"/>
    <property type="match status" value="1"/>
</dbReference>
<comment type="function">
    <text evidence="1">Involved in the biosynthesis of isoprenoids. Catalyzes the 1,3-allylic rearrangement of the homoallylic substrate isopentenyl (IPP) to its allylic isomer, dimethylallyl diphosphate (DMAPP).</text>
</comment>
<comment type="catalytic activity">
    <reaction evidence="1">
        <text>isopentenyl diphosphate = dimethylallyl diphosphate</text>
        <dbReference type="Rhea" id="RHEA:23284"/>
        <dbReference type="ChEBI" id="CHEBI:57623"/>
        <dbReference type="ChEBI" id="CHEBI:128769"/>
        <dbReference type="EC" id="5.3.3.2"/>
    </reaction>
</comment>
<comment type="cofactor">
    <cofactor evidence="1">
        <name>FMN</name>
        <dbReference type="ChEBI" id="CHEBI:58210"/>
    </cofactor>
</comment>
<comment type="cofactor">
    <cofactor evidence="1">
        <name>NADPH</name>
        <dbReference type="ChEBI" id="CHEBI:57783"/>
    </cofactor>
</comment>
<comment type="cofactor">
    <cofactor evidence="1">
        <name>Mg(2+)</name>
        <dbReference type="ChEBI" id="CHEBI:18420"/>
    </cofactor>
</comment>
<comment type="subunit">
    <text evidence="1">Homooctamer. Dimer of tetramers.</text>
</comment>
<comment type="subcellular location">
    <subcellularLocation>
        <location evidence="1">Cytoplasm</location>
    </subcellularLocation>
</comment>
<comment type="similarity">
    <text evidence="1">Belongs to the IPP isomerase type 2 family.</text>
</comment>